<name>OSPG_SHIFL</name>
<sequence length="196" mass="22570">MKITSTIIQTPFPFENNNSHAGIVTEPILGKLIGQGSTAEIFEDVNDSSALYKKYDLIGNQYNEILEMAWQESELFNAFYGDEASVVIQYGGDVYLRMLRVPGTPLSDIDTADIPDNIESLYLQLICKLNELSIIHYDLNTGNMLYDKESESLFPIDFRNIYAEYYAATKKDKEIIDRRLQMRTNDFYSLLNRKYL</sequence>
<organism>
    <name type="scientific">Shigella flexneri</name>
    <dbReference type="NCBI Taxonomy" id="623"/>
    <lineage>
        <taxon>Bacteria</taxon>
        <taxon>Pseudomonadati</taxon>
        <taxon>Pseudomonadota</taxon>
        <taxon>Gammaproteobacteria</taxon>
        <taxon>Enterobacterales</taxon>
        <taxon>Enterobacteriaceae</taxon>
        <taxon>Shigella</taxon>
    </lineage>
</organism>
<accession>Q99PZ6</accession>
<accession>Q7BCI9</accession>
<accession>Q7BEJ9</accession>
<comment type="function">
    <text evidence="2">Effector proteins function to alter host cell physiology and promote bacterial survival in host tissues. This protein is a kinase that is involved in down-regulation of the host innate response induced by invasive bacteria. Prevents or at least delays host phospho-NF-kappa-B inhibitor alpha (NFKBIA) degradation. Does not phosphorylate E2 enzymes.</text>
</comment>
<comment type="subunit">
    <text evidence="2">Binds various host ubiquitinated E2 ubiquitin-conjugating enzymes, including UBE2D2 (UBCH5B).</text>
</comment>
<comment type="interaction">
    <interactant intactId="EBI-9316527">
        <id>Q99PZ6</id>
    </interactant>
    <interactant intactId="EBI-347677">
        <id>P62837</id>
        <label>UBE2D2</label>
    </interactant>
    <organismsDiffer>true</organismsDiffer>
    <experiments>3</experiments>
</comment>
<comment type="interaction">
    <interactant intactId="EBI-9316527">
        <id>Q99PZ6</id>
    </interactant>
    <interactant intactId="EBI-348268">
        <id>P61077</id>
        <label>UBE2D3</label>
    </interactant>
    <organismsDiffer>true</organismsDiffer>
    <experiments>6</experiments>
</comment>
<comment type="interaction">
    <interactant intactId="EBI-9316527">
        <id>Q99PZ6</id>
    </interactant>
    <interactant intactId="EBI-348546">
        <id>P51965</id>
        <label>UBE2E1</label>
    </interactant>
    <organismsDiffer>true</organismsDiffer>
    <experiments>3</experiments>
</comment>
<comment type="interaction">
    <interactant intactId="EBI-9316527">
        <id>Q99PZ6</id>
    </interactant>
    <interactant intactId="EBI-2129763">
        <id>Q96LR5</id>
        <label>UBE2E2</label>
    </interactant>
    <organismsDiffer>true</organismsDiffer>
    <experiments>2</experiments>
</comment>
<comment type="interaction">
    <interactant intactId="EBI-9316527">
        <id>Q99PZ6</id>
    </interactant>
    <interactant intactId="EBI-473850">
        <id>P61086</id>
        <label>UBE2K</label>
    </interactant>
    <organismsDiffer>true</organismsDiffer>
    <experiments>2</experiments>
</comment>
<comment type="interaction">
    <interactant intactId="EBI-9316527">
        <id>Q99PZ6</id>
    </interactant>
    <interactant intactId="EBI-711173">
        <id>P68036</id>
        <label>UBE2L3</label>
    </interactant>
    <organismsDiffer>true</organismsDiffer>
    <experiments>3</experiments>
</comment>
<comment type="interaction">
    <interactant intactId="EBI-9316527">
        <id>Q99PZ6</id>
    </interactant>
    <interactant intactId="EBI-15556257">
        <id>P68036-1</id>
        <label>UBE2L3</label>
    </interactant>
    <organismsDiffer>true</organismsDiffer>
    <experiments>4</experiments>
</comment>
<comment type="interaction">
    <interactant intactId="EBI-9316527">
        <id>Q99PZ6</id>
    </interactant>
    <interactant intactId="EBI-2129974">
        <id>O14933</id>
        <label>UBE2L6</label>
    </interactant>
    <organismsDiffer>true</organismsDiffer>
    <experiments>2</experiments>
</comment>
<comment type="subcellular location">
    <subcellularLocation>
        <location evidence="1">Secreted</location>
    </subcellularLocation>
    <subcellularLocation>
        <location evidence="4">Host cell</location>
    </subcellularLocation>
    <text evidence="3">Secreted via Mxi-Spa type III secretion system (T3SS), and delivered into the host cell.</text>
</comment>
<comment type="PTM">
    <text>Autophosphorylated.</text>
</comment>
<comment type="disruption phenotype">
    <text evidence="2">Mutant induces a stronger inflammatory reaction upon infection.</text>
</comment>
<comment type="similarity">
    <text evidence="3">Belongs to the protein kinase superfamily.</text>
</comment>
<proteinExistence type="evidence at protein level"/>
<keyword id="KW-0002">3D-structure</keyword>
<keyword id="KW-0903">Direct protein sequencing</keyword>
<keyword id="KW-0418">Kinase</keyword>
<keyword id="KW-0597">Phosphoprotein</keyword>
<keyword id="KW-0614">Plasmid</keyword>
<keyword id="KW-1185">Reference proteome</keyword>
<keyword id="KW-0964">Secreted</keyword>
<keyword id="KW-0808">Transferase</keyword>
<keyword id="KW-0843">Virulence</keyword>
<reference key="1">
    <citation type="journal article" date="2000" name="Mol. Microbiol.">
        <title>The virulence plasmid pWR100 and the repertoire of proteins secreted by the type III secretion apparatus of Shigella flexneri.</title>
        <authorList>
            <person name="Buchrieser C."/>
            <person name="Glaser P."/>
            <person name="Rusniok C."/>
            <person name="Nedjari H."/>
            <person name="d'Hauteville H."/>
            <person name="Kunst F."/>
            <person name="Sansonetti P.J."/>
            <person name="Parsot C."/>
        </authorList>
    </citation>
    <scope>NUCLEOTIDE SEQUENCE [GENOMIC DNA]</scope>
    <scope>PROTEIN SEQUENCE OF 1-9</scope>
    <scope>SUBCELLULAR LOCATION</scope>
    <source>
        <strain>M90T / Serotype 5a</strain>
        <plasmid>pWR100</plasmid>
    </source>
</reference>
<reference key="2">
    <citation type="journal article" date="2001" name="Infect. Immun.">
        <title>Complete DNA sequence and analysis of the large virulence plasmid of Shigella flexneri.</title>
        <authorList>
            <person name="Venkatesan M.M."/>
            <person name="Goldberg M.B."/>
            <person name="Rose D.J."/>
            <person name="Grotbeck E.J."/>
            <person name="Burland V."/>
            <person name="Blattner F.R."/>
        </authorList>
    </citation>
    <scope>NUCLEOTIDE SEQUENCE [GENOMIC DNA]</scope>
    <source>
        <strain>M90T / Serotype 5a</strain>
        <plasmid>pWR501</plasmid>
    </source>
</reference>
<reference key="3">
    <citation type="journal article" date="2006" name="Sci. China, Ser. C, Life Sci.">
        <title>Comparison of the virulence plasmid genomes of two strains of Shigella which lost the ability to bind Congo red.</title>
        <authorList>
            <person name="Xiong Z."/>
            <person name="Tang X."/>
            <person name="Yang F."/>
            <person name="Zhang X."/>
            <person name="Yang J."/>
            <person name="Chen L."/>
            <person name="Nie H."/>
            <person name="Yan Y."/>
            <person name="Jiang Y."/>
            <person name="Wang J."/>
            <person name="Xue Y."/>
            <person name="Xu X."/>
            <person name="Zhu Y."/>
            <person name="Dong J."/>
            <person name="An L."/>
            <person name="Wang X."/>
            <person name="Jin Q."/>
        </authorList>
    </citation>
    <scope>NUCLEOTIDE SEQUENCE [GENOMIC DNA]</scope>
    <source>
        <strain>Serotype 5</strain>
        <plasmid>pSF5</plasmid>
    </source>
</reference>
<reference key="4">
    <citation type="journal article" date="2002" name="Nucleic Acids Res.">
        <title>Genome sequence of Shigella flexneri 2a: insights into pathogenicity through comparison with genomes of Escherichia coli K12 and O157.</title>
        <authorList>
            <person name="Jin Q."/>
            <person name="Yuan Z."/>
            <person name="Xu J."/>
            <person name="Wang Y."/>
            <person name="Shen Y."/>
            <person name="Lu W."/>
            <person name="Wang J."/>
            <person name="Liu H."/>
            <person name="Yang J."/>
            <person name="Yang F."/>
            <person name="Zhang X."/>
            <person name="Zhang J."/>
            <person name="Yang G."/>
            <person name="Wu H."/>
            <person name="Qu D."/>
            <person name="Dong J."/>
            <person name="Sun L."/>
            <person name="Xue Y."/>
            <person name="Zhao A."/>
            <person name="Gao Y."/>
            <person name="Zhu J."/>
            <person name="Kan B."/>
            <person name="Ding K."/>
            <person name="Chen S."/>
            <person name="Cheng H."/>
            <person name="Yao Z."/>
            <person name="He B."/>
            <person name="Chen R."/>
            <person name="Ma D."/>
            <person name="Qiang B."/>
            <person name="Wen Y."/>
            <person name="Hou Y."/>
            <person name="Yu J."/>
        </authorList>
    </citation>
    <scope>NUCLEOTIDE SEQUENCE [LARGE SCALE GENOMIC DNA]</scope>
    <source>
        <strain>301 / Serotype 2a</strain>
        <plasmid>pCP301</plasmid>
    </source>
</reference>
<reference key="5">
    <citation type="journal article" date="2005" name="Proc. Natl. Acad. Sci. U.S.A.">
        <title>The Shigella flexneri effector OspG interferes with innate immune responses by targeting ubiquitin-conjugating enzymes.</title>
        <authorList>
            <person name="Kim D.W."/>
            <person name="Lenzen G."/>
            <person name="Page A.L."/>
            <person name="Legrain P."/>
            <person name="Sansonetti P.J."/>
            <person name="Parsot C."/>
        </authorList>
    </citation>
    <scope>FUNCTION</scope>
    <scope>SUBUNIT</scope>
    <scope>PTM</scope>
    <scope>DISRUPTION PHENOTYPE</scope>
    <scope>MUTAGENESIS OF LYS-53</scope>
    <source>
        <strain>M90T / Serotype 5a</strain>
    </source>
</reference>
<geneLocation type="plasmid">
    <name>pCP301</name>
</geneLocation>
<geneLocation type="plasmid">
    <name>pWR100</name>
</geneLocation>
<geneLocation type="plasmid">
    <name>pWR501</name>
</geneLocation>
<geneLocation type="plasmid">
    <name>pSF5</name>
</geneLocation>
<feature type="chain" id="PRO_0000395877" description="Protein kinase OspG">
    <location>
        <begin position="1"/>
        <end position="196"/>
    </location>
</feature>
<feature type="mutagenesis site" description="Lack of autophosphorylation." evidence="2">
    <original>K</original>
    <variation>A</variation>
    <location>
        <position position="53"/>
    </location>
</feature>
<feature type="strand" evidence="5">
    <location>
        <begin position="31"/>
        <end position="35"/>
    </location>
</feature>
<feature type="strand" evidence="5">
    <location>
        <begin position="37"/>
        <end position="43"/>
    </location>
</feature>
<feature type="strand" evidence="5">
    <location>
        <begin position="50"/>
        <end position="55"/>
    </location>
</feature>
<feature type="strand" evidence="5">
    <location>
        <begin position="58"/>
        <end position="60"/>
    </location>
</feature>
<feature type="helix" evidence="5">
    <location>
        <begin position="62"/>
        <end position="80"/>
    </location>
</feature>
<feature type="strand" evidence="5">
    <location>
        <begin position="84"/>
        <end position="90"/>
    </location>
</feature>
<feature type="strand" evidence="5">
    <location>
        <begin position="93"/>
        <end position="99"/>
    </location>
</feature>
<feature type="strand" evidence="5">
    <location>
        <begin position="103"/>
        <end position="105"/>
    </location>
</feature>
<feature type="turn" evidence="5">
    <location>
        <begin position="106"/>
        <end position="108"/>
    </location>
</feature>
<feature type="helix" evidence="5">
    <location>
        <begin position="111"/>
        <end position="113"/>
    </location>
</feature>
<feature type="helix" evidence="5">
    <location>
        <begin position="118"/>
        <end position="131"/>
    </location>
</feature>
<feature type="helix" evidence="5">
    <location>
        <begin position="141"/>
        <end position="143"/>
    </location>
</feature>
<feature type="strand" evidence="5">
    <location>
        <begin position="144"/>
        <end position="147"/>
    </location>
</feature>
<feature type="turn" evidence="5">
    <location>
        <begin position="148"/>
        <end position="151"/>
    </location>
</feature>
<feature type="strand" evidence="5">
    <location>
        <begin position="152"/>
        <end position="155"/>
    </location>
</feature>
<feature type="helix" evidence="5">
    <location>
        <begin position="162"/>
        <end position="167"/>
    </location>
</feature>
<feature type="turn" evidence="5">
    <location>
        <begin position="170"/>
        <end position="172"/>
    </location>
</feature>
<feature type="helix" evidence="5">
    <location>
        <begin position="173"/>
        <end position="193"/>
    </location>
</feature>
<evidence type="ECO:0000269" key="1">
    <source>
    </source>
</evidence>
<evidence type="ECO:0000269" key="2">
    <source>
    </source>
</evidence>
<evidence type="ECO:0000305" key="3"/>
<evidence type="ECO:0000305" key="4">
    <source>
    </source>
</evidence>
<evidence type="ECO:0007829" key="5">
    <source>
        <dbReference type="PDB" id="4BVU"/>
    </source>
</evidence>
<protein>
    <recommendedName>
        <fullName>Protein kinase OspG</fullName>
        <ecNumber>2.7.-.-</ecNumber>
    </recommendedName>
    <alternativeName>
        <fullName>Effector protein OspG</fullName>
    </alternativeName>
</protein>
<gene>
    <name type="primary">ospG</name>
    <name type="ordered locus">CP0227</name>
    <name type="ORF">pWR501_0237</name>
    <name type="ORF">SFLP087</name>
</gene>
<dbReference type="EC" id="2.7.-.-"/>
<dbReference type="EMBL" id="AF386526">
    <property type="protein sequence ID" value="AAL72314.1"/>
    <property type="molecule type" value="Genomic_DNA"/>
</dbReference>
<dbReference type="EMBL" id="AF348706">
    <property type="protein sequence ID" value="AAK18547.1"/>
    <property type="molecule type" value="Genomic_DNA"/>
</dbReference>
<dbReference type="EMBL" id="AY879342">
    <property type="protein sequence ID" value="AAW64846.1"/>
    <property type="molecule type" value="Genomic_DNA"/>
</dbReference>
<dbReference type="EMBL" id="AL391753">
    <property type="protein sequence ID" value="CAC05855.1"/>
    <property type="molecule type" value="Genomic_DNA"/>
</dbReference>
<dbReference type="RefSeq" id="NP_085391.1">
    <property type="nucleotide sequence ID" value="NC_002698.1"/>
</dbReference>
<dbReference type="RefSeq" id="NP_858360.1">
    <property type="nucleotide sequence ID" value="NC_004851.1"/>
</dbReference>
<dbReference type="RefSeq" id="WP_000705601.1">
    <property type="nucleotide sequence ID" value="NZ_WPGW01000288.1"/>
</dbReference>
<dbReference type="RefSeq" id="YP_006960315.1">
    <property type="nucleotide sequence ID" value="NC_019197.1"/>
</dbReference>
<dbReference type="RefSeq" id="YP_009062537.1">
    <property type="nucleotide sequence ID" value="NC_024996.1"/>
</dbReference>
<dbReference type="PDB" id="4BVU">
    <property type="method" value="X-ray"/>
    <property type="resolution" value="2.70 A"/>
    <property type="chains" value="A=1-196"/>
</dbReference>
<dbReference type="PDBsum" id="4BVU"/>
<dbReference type="SMR" id="Q99PZ6"/>
<dbReference type="DIP" id="DIP-60998N"/>
<dbReference type="IntAct" id="Q99PZ6">
    <property type="interactions" value="11"/>
</dbReference>
<dbReference type="MINT" id="Q99PZ6"/>
<dbReference type="PaxDb" id="198214-CP0227"/>
<dbReference type="GeneID" id="1238010"/>
<dbReference type="KEGG" id="sfl:CP0227"/>
<dbReference type="PATRIC" id="fig|198214.7.peg.5485"/>
<dbReference type="HOGENOM" id="CLU_120872_0_0_6"/>
<dbReference type="EvolutionaryTrace" id="Q99PZ6"/>
<dbReference type="PRO" id="PR:Q99PZ6"/>
<dbReference type="Proteomes" id="UP000001006">
    <property type="component" value="Plasmid pCP301"/>
</dbReference>
<dbReference type="GO" id="GO:0005615">
    <property type="term" value="C:extracellular space"/>
    <property type="evidence" value="ECO:0000314"/>
    <property type="project" value="UniProtKB"/>
</dbReference>
<dbReference type="GO" id="GO:0043657">
    <property type="term" value="C:host cell"/>
    <property type="evidence" value="ECO:0007669"/>
    <property type="project" value="UniProtKB-SubCell"/>
</dbReference>
<dbReference type="GO" id="GO:0016301">
    <property type="term" value="F:kinase activity"/>
    <property type="evidence" value="ECO:0000314"/>
    <property type="project" value="UniProtKB"/>
</dbReference>
<dbReference type="GO" id="GO:0046777">
    <property type="term" value="P:protein autophosphorylation"/>
    <property type="evidence" value="ECO:0000314"/>
    <property type="project" value="UniProtKB"/>
</dbReference>
<dbReference type="Gene3D" id="3.30.200.20">
    <property type="entry name" value="Phosphorylase Kinase, domain 1"/>
    <property type="match status" value="1"/>
</dbReference>
<dbReference type="Gene3D" id="1.10.510.10">
    <property type="entry name" value="Transferase(Phosphotransferase) domain 1"/>
    <property type="match status" value="1"/>
</dbReference>
<dbReference type="InterPro" id="IPR011009">
    <property type="entry name" value="Kinase-like_dom_sf"/>
</dbReference>
<dbReference type="InterPro" id="IPR054466">
    <property type="entry name" value="OspG_kinase"/>
</dbReference>
<dbReference type="Pfam" id="PF22303">
    <property type="entry name" value="OspG_kinase"/>
    <property type="match status" value="1"/>
</dbReference>
<dbReference type="SUPFAM" id="SSF56112">
    <property type="entry name" value="Protein kinase-like (PK-like)"/>
    <property type="match status" value="1"/>
</dbReference>